<dbReference type="EMBL" id="AE005673">
    <property type="protein sequence ID" value="AAK25640.1"/>
    <property type="molecule type" value="Genomic_DNA"/>
</dbReference>
<dbReference type="PIR" id="D87705">
    <property type="entry name" value="D87705"/>
</dbReference>
<dbReference type="RefSeq" id="NP_422472.1">
    <property type="nucleotide sequence ID" value="NC_002696.2"/>
</dbReference>
<dbReference type="STRING" id="190650.CC_3678"/>
<dbReference type="EnsemblBacteria" id="AAK25640">
    <property type="protein sequence ID" value="AAK25640"/>
    <property type="gene ID" value="CC_3678"/>
</dbReference>
<dbReference type="KEGG" id="ccr:CC_3678"/>
<dbReference type="PATRIC" id="fig|190650.5.peg.3678"/>
<dbReference type="eggNOG" id="COG2917">
    <property type="taxonomic scope" value="Bacteria"/>
</dbReference>
<dbReference type="HOGENOM" id="CLU_089554_1_0_5"/>
<dbReference type="BioCyc" id="CAULO:CC3678-MONOMER"/>
<dbReference type="Proteomes" id="UP000001816">
    <property type="component" value="Chromosome"/>
</dbReference>
<dbReference type="GO" id="GO:0005886">
    <property type="term" value="C:plasma membrane"/>
    <property type="evidence" value="ECO:0007669"/>
    <property type="project" value="UniProtKB-SubCell"/>
</dbReference>
<dbReference type="HAMAP" id="MF_00189">
    <property type="entry name" value="YciB"/>
    <property type="match status" value="1"/>
</dbReference>
<dbReference type="InterPro" id="IPR006008">
    <property type="entry name" value="YciB"/>
</dbReference>
<dbReference type="PANTHER" id="PTHR36917:SF1">
    <property type="entry name" value="INNER MEMBRANE-SPANNING PROTEIN YCIB"/>
    <property type="match status" value="1"/>
</dbReference>
<dbReference type="PANTHER" id="PTHR36917">
    <property type="entry name" value="INTRACELLULAR SEPTATION PROTEIN A-RELATED"/>
    <property type="match status" value="1"/>
</dbReference>
<dbReference type="Pfam" id="PF04279">
    <property type="entry name" value="IspA"/>
    <property type="match status" value="1"/>
</dbReference>
<name>YCIB_CAUVC</name>
<evidence type="ECO:0000255" key="1">
    <source>
        <dbReference type="HAMAP-Rule" id="MF_00189"/>
    </source>
</evidence>
<reference key="1">
    <citation type="journal article" date="2001" name="Proc. Natl. Acad. Sci. U.S.A.">
        <title>Complete genome sequence of Caulobacter crescentus.</title>
        <authorList>
            <person name="Nierman W.C."/>
            <person name="Feldblyum T.V."/>
            <person name="Laub M.T."/>
            <person name="Paulsen I.T."/>
            <person name="Nelson K.E."/>
            <person name="Eisen J.A."/>
            <person name="Heidelberg J.F."/>
            <person name="Alley M.R.K."/>
            <person name="Ohta N."/>
            <person name="Maddock J.R."/>
            <person name="Potocka I."/>
            <person name="Nelson W.C."/>
            <person name="Newton A."/>
            <person name="Stephens C."/>
            <person name="Phadke N.D."/>
            <person name="Ely B."/>
            <person name="DeBoy R.T."/>
            <person name="Dodson R.J."/>
            <person name="Durkin A.S."/>
            <person name="Gwinn M.L."/>
            <person name="Haft D.H."/>
            <person name="Kolonay J.F."/>
            <person name="Smit J."/>
            <person name="Craven M.B."/>
            <person name="Khouri H.M."/>
            <person name="Shetty J."/>
            <person name="Berry K.J."/>
            <person name="Utterback T.R."/>
            <person name="Tran K."/>
            <person name="Wolf A.M."/>
            <person name="Vamathevan J.J."/>
            <person name="Ermolaeva M.D."/>
            <person name="White O."/>
            <person name="Salzberg S.L."/>
            <person name="Venter J.C."/>
            <person name="Shapiro L."/>
            <person name="Fraser C.M."/>
        </authorList>
    </citation>
    <scope>NUCLEOTIDE SEQUENCE [LARGE SCALE GENOMIC DNA]</scope>
    <source>
        <strain>ATCC 19089 / CIP 103742 / CB 15</strain>
    </source>
</reference>
<comment type="function">
    <text evidence="1">Plays a role in cell envelope biogenesis, maintenance of cell envelope integrity and membrane homeostasis.</text>
</comment>
<comment type="subcellular location">
    <subcellularLocation>
        <location evidence="1">Cell inner membrane</location>
        <topology evidence="1">Multi-pass membrane protein</topology>
    </subcellularLocation>
</comment>
<comment type="similarity">
    <text evidence="1">Belongs to the YciB family.</text>
</comment>
<feature type="chain" id="PRO_0000206530" description="Inner membrane-spanning protein YciB">
    <location>
        <begin position="1"/>
        <end position="188"/>
    </location>
</feature>
<feature type="transmembrane region" description="Helical" evidence="1">
    <location>
        <begin position="23"/>
        <end position="43"/>
    </location>
</feature>
<feature type="transmembrane region" description="Helical" evidence="1">
    <location>
        <begin position="49"/>
        <end position="69"/>
    </location>
</feature>
<feature type="transmembrane region" description="Helical" evidence="1">
    <location>
        <begin position="73"/>
        <end position="93"/>
    </location>
</feature>
<feature type="transmembrane region" description="Helical" evidence="1">
    <location>
        <begin position="116"/>
        <end position="133"/>
    </location>
</feature>
<feature type="transmembrane region" description="Helical" evidence="1">
    <location>
        <begin position="149"/>
        <end position="169"/>
    </location>
</feature>
<sequence length="188" mass="20432">MRTVVDYGAAIAFGVAYFVTKDFQKATWVLVAASAAALAIGYAVERRLAMLPLFFGGMALVFGTLGLIFGSDVFVKIKVTVINLALASFLVGGVLLKRQPLKVIMGEALHLPDAAWRTLTLRYGAYFAFVAIINEVVRNTQDTDTWVKFRLALLPVALVFVATQLPFMMKHMAKGDDAKAVEPPDAGF</sequence>
<accession>Q9A288</accession>
<gene>
    <name evidence="1" type="primary">yciB</name>
    <name type="ordered locus">CC_3678</name>
</gene>
<keyword id="KW-0997">Cell inner membrane</keyword>
<keyword id="KW-1003">Cell membrane</keyword>
<keyword id="KW-0472">Membrane</keyword>
<keyword id="KW-1185">Reference proteome</keyword>
<keyword id="KW-0812">Transmembrane</keyword>
<keyword id="KW-1133">Transmembrane helix</keyword>
<protein>
    <recommendedName>
        <fullName evidence="1">Inner membrane-spanning protein YciB</fullName>
    </recommendedName>
</protein>
<proteinExistence type="inferred from homology"/>
<organism>
    <name type="scientific">Caulobacter vibrioides (strain ATCC 19089 / CIP 103742 / CB 15)</name>
    <name type="common">Caulobacter crescentus</name>
    <dbReference type="NCBI Taxonomy" id="190650"/>
    <lineage>
        <taxon>Bacteria</taxon>
        <taxon>Pseudomonadati</taxon>
        <taxon>Pseudomonadota</taxon>
        <taxon>Alphaproteobacteria</taxon>
        <taxon>Caulobacterales</taxon>
        <taxon>Caulobacteraceae</taxon>
        <taxon>Caulobacter</taxon>
    </lineage>
</organism>